<proteinExistence type="evidence at transcript level"/>
<name>ACT2_LUMTE</name>
<sequence length="376" mass="41840">MAEEDVAALVVDNGSGMCKAGFAGDDAPRAVFPSIVGRPRHQGVMVGMGQKDSYVGDEAQSKRGILTLKYPIEHGIVTNWDDMEKIWHHTFYNELRVAPEEHPVLLTEAPLNPKANREKMTQIMFETFNSPAMYVAIQAVLSLYASGRTTGIVLDSGDGVTHTVPIYEGYALPHAILRLDLAGRDLTDYLMKILTERGYSFTTTAEREIVRDIKEKLCYVALDFEQEMNTASASSSLEKSYELPDGQVITIGNERFRCPEAMFHASFLGMESVGIHETTYNSIMKCDVDIRKDLYANTVLSGGTTMFPGIADRMQKEITALAPPTMKIKIIAPPERKYSVWIGGSILASLSTFQQMWISKQEYDESGPSIVHRKCF</sequence>
<organism>
    <name type="scientific">Lumbricus terrestris</name>
    <name type="common">Common earthworm</name>
    <dbReference type="NCBI Taxonomy" id="6398"/>
    <lineage>
        <taxon>Eukaryota</taxon>
        <taxon>Metazoa</taxon>
        <taxon>Spiralia</taxon>
        <taxon>Lophotrochozoa</taxon>
        <taxon>Annelida</taxon>
        <taxon>Clitellata</taxon>
        <taxon>Oligochaeta</taxon>
        <taxon>Crassiclitellata</taxon>
        <taxon>Lumbricina</taxon>
        <taxon>Lumbricidae</taxon>
        <taxon>Lumbricinae</taxon>
        <taxon>Lumbricus</taxon>
    </lineage>
</organism>
<accession>P92176</accession>
<feature type="chain" id="PRO_0000088954" description="Actin-2">
    <location>
        <begin position="1"/>
        <end position="376"/>
    </location>
</feature>
<protein>
    <recommendedName>
        <fullName>Actin-2</fullName>
        <ecNumber evidence="1">3.6.4.-</ecNumber>
    </recommendedName>
</protein>
<reference key="1">
    <citation type="journal article" date="1996" name="Gene">
        <title>Nucleotide sequence of two actin genes of Lumbricus terrestris.</title>
        <authorList>
            <person name="Lewke N."/>
            <person name="Weber K."/>
        </authorList>
    </citation>
    <scope>NUCLEOTIDE SEQUENCE [GENOMIC DNA / MRNA]</scope>
</reference>
<dbReference type="EC" id="3.6.4.-" evidence="1"/>
<dbReference type="EMBL" id="X96516">
    <property type="protein sequence ID" value="CAA65365.1"/>
    <property type="molecule type" value="Genomic_DNA"/>
</dbReference>
<dbReference type="EMBL" id="X96513">
    <property type="protein sequence ID" value="CAA65362.1"/>
    <property type="molecule type" value="mRNA"/>
</dbReference>
<dbReference type="PIR" id="JC5228">
    <property type="entry name" value="JC5228"/>
</dbReference>
<dbReference type="SMR" id="P92176"/>
<dbReference type="GO" id="GO:0005737">
    <property type="term" value="C:cytoplasm"/>
    <property type="evidence" value="ECO:0007669"/>
    <property type="project" value="UniProtKB-KW"/>
</dbReference>
<dbReference type="GO" id="GO:0005856">
    <property type="term" value="C:cytoskeleton"/>
    <property type="evidence" value="ECO:0007669"/>
    <property type="project" value="UniProtKB-SubCell"/>
</dbReference>
<dbReference type="GO" id="GO:0005524">
    <property type="term" value="F:ATP binding"/>
    <property type="evidence" value="ECO:0007669"/>
    <property type="project" value="UniProtKB-KW"/>
</dbReference>
<dbReference type="GO" id="GO:0016787">
    <property type="term" value="F:hydrolase activity"/>
    <property type="evidence" value="ECO:0007669"/>
    <property type="project" value="UniProtKB-KW"/>
</dbReference>
<dbReference type="CDD" id="cd10224">
    <property type="entry name" value="ASKHA_NBD_actin"/>
    <property type="match status" value="1"/>
</dbReference>
<dbReference type="FunFam" id="2.30.36.70:FF:000001">
    <property type="entry name" value="Actin, alpha skeletal muscle"/>
    <property type="match status" value="1"/>
</dbReference>
<dbReference type="FunFam" id="3.30.420.40:FF:000131">
    <property type="entry name" value="Actin, alpha skeletal muscle"/>
    <property type="match status" value="1"/>
</dbReference>
<dbReference type="FunFam" id="3.30.420.40:FF:000291">
    <property type="entry name" value="Actin, alpha skeletal muscle"/>
    <property type="match status" value="1"/>
</dbReference>
<dbReference type="FunFam" id="3.90.640.10:FF:000047">
    <property type="entry name" value="Actin, alpha skeletal muscle"/>
    <property type="match status" value="1"/>
</dbReference>
<dbReference type="FunFam" id="3.30.420.40:FF:000058">
    <property type="entry name" value="Putative actin-related protein 5"/>
    <property type="match status" value="1"/>
</dbReference>
<dbReference type="Gene3D" id="3.30.420.40">
    <property type="match status" value="2"/>
</dbReference>
<dbReference type="Gene3D" id="3.90.640.10">
    <property type="entry name" value="Actin, Chain A, domain 4"/>
    <property type="match status" value="1"/>
</dbReference>
<dbReference type="InterPro" id="IPR004000">
    <property type="entry name" value="Actin"/>
</dbReference>
<dbReference type="InterPro" id="IPR020902">
    <property type="entry name" value="Actin/actin-like_CS"/>
</dbReference>
<dbReference type="InterPro" id="IPR004001">
    <property type="entry name" value="Actin_CS"/>
</dbReference>
<dbReference type="InterPro" id="IPR043129">
    <property type="entry name" value="ATPase_NBD"/>
</dbReference>
<dbReference type="PANTHER" id="PTHR11937">
    <property type="entry name" value="ACTIN"/>
    <property type="match status" value="1"/>
</dbReference>
<dbReference type="Pfam" id="PF00022">
    <property type="entry name" value="Actin"/>
    <property type="match status" value="1"/>
</dbReference>
<dbReference type="PRINTS" id="PR00190">
    <property type="entry name" value="ACTIN"/>
</dbReference>
<dbReference type="SMART" id="SM00268">
    <property type="entry name" value="ACTIN"/>
    <property type="match status" value="1"/>
</dbReference>
<dbReference type="SUPFAM" id="SSF53067">
    <property type="entry name" value="Actin-like ATPase domain"/>
    <property type="match status" value="2"/>
</dbReference>
<dbReference type="PROSITE" id="PS00406">
    <property type="entry name" value="ACTINS_1"/>
    <property type="match status" value="1"/>
</dbReference>
<dbReference type="PROSITE" id="PS00432">
    <property type="entry name" value="ACTINS_2"/>
    <property type="match status" value="1"/>
</dbReference>
<dbReference type="PROSITE" id="PS01132">
    <property type="entry name" value="ACTINS_ACT_LIKE"/>
    <property type="match status" value="1"/>
</dbReference>
<comment type="function">
    <text>Actins are highly conserved proteins that are involved in various types of cell motility and are ubiquitously expressed in all eukaryotic cells.</text>
</comment>
<comment type="catalytic activity">
    <reaction evidence="1">
        <text>ATP + H2O = ADP + phosphate + H(+)</text>
        <dbReference type="Rhea" id="RHEA:13065"/>
        <dbReference type="ChEBI" id="CHEBI:15377"/>
        <dbReference type="ChEBI" id="CHEBI:15378"/>
        <dbReference type="ChEBI" id="CHEBI:30616"/>
        <dbReference type="ChEBI" id="CHEBI:43474"/>
        <dbReference type="ChEBI" id="CHEBI:456216"/>
    </reaction>
</comment>
<comment type="subcellular location">
    <subcellularLocation>
        <location>Cytoplasm</location>
        <location>Cytoskeleton</location>
    </subcellularLocation>
</comment>
<comment type="similarity">
    <text evidence="2">Belongs to the actin family.</text>
</comment>
<gene>
    <name type="primary">ACT2</name>
</gene>
<evidence type="ECO:0000250" key="1">
    <source>
        <dbReference type="UniProtKB" id="P68137"/>
    </source>
</evidence>
<evidence type="ECO:0000305" key="2"/>
<keyword id="KW-0067">ATP-binding</keyword>
<keyword id="KW-0963">Cytoplasm</keyword>
<keyword id="KW-0206">Cytoskeleton</keyword>
<keyword id="KW-0378">Hydrolase</keyword>
<keyword id="KW-0547">Nucleotide-binding</keyword>